<proteinExistence type="inferred from homology"/>
<name>KTHY_MESH7</name>
<comment type="function">
    <text evidence="1">Phosphorylation of dTMP to form dTDP in both de novo and salvage pathways of dTTP synthesis.</text>
</comment>
<comment type="catalytic activity">
    <reaction evidence="1">
        <text>dTMP + ATP = dTDP + ADP</text>
        <dbReference type="Rhea" id="RHEA:13517"/>
        <dbReference type="ChEBI" id="CHEBI:30616"/>
        <dbReference type="ChEBI" id="CHEBI:58369"/>
        <dbReference type="ChEBI" id="CHEBI:63528"/>
        <dbReference type="ChEBI" id="CHEBI:456216"/>
        <dbReference type="EC" id="2.7.4.9"/>
    </reaction>
</comment>
<comment type="similarity">
    <text evidence="1">Belongs to the thymidylate kinase family.</text>
</comment>
<sequence>MFISFEGIDASGKSTVMDLFAKYLKIKFPEKDIVTTFEPGGKNLKEALLIREFLLSKNNQISPYVEMLLFATARRIHLERLIWPALKAGKIVLCDRYIDSSIAYQGFGNGLDIDLVTSLNSLISENTFPDLTIFLDIKISKSFERMGIFRDHNRDRLENKGVEFYERVINGYEFLTKKNKNFFKIDGNGTYDEVLDLIIDFFEKYYASWPK</sequence>
<evidence type="ECO:0000255" key="1">
    <source>
        <dbReference type="HAMAP-Rule" id="MF_00165"/>
    </source>
</evidence>
<feature type="chain" id="PRO_1000023228" description="Thymidylate kinase">
    <location>
        <begin position="1"/>
        <end position="211"/>
    </location>
</feature>
<feature type="binding site" evidence="1">
    <location>
        <begin position="7"/>
        <end position="14"/>
    </location>
    <ligand>
        <name>ATP</name>
        <dbReference type="ChEBI" id="CHEBI:30616"/>
    </ligand>
</feature>
<gene>
    <name evidence="1" type="primary">tmk</name>
    <name type="ordered locus">MHP7448_0259</name>
</gene>
<organism>
    <name type="scientific">Mesomycoplasma hyopneumoniae (strain 7448)</name>
    <name type="common">Mycoplasma hyopneumoniae</name>
    <dbReference type="NCBI Taxonomy" id="262722"/>
    <lineage>
        <taxon>Bacteria</taxon>
        <taxon>Bacillati</taxon>
        <taxon>Mycoplasmatota</taxon>
        <taxon>Mycoplasmoidales</taxon>
        <taxon>Metamycoplasmataceae</taxon>
        <taxon>Mesomycoplasma</taxon>
    </lineage>
</organism>
<reference key="1">
    <citation type="journal article" date="2005" name="J. Bacteriol.">
        <title>Swine and poultry pathogens: the complete genome sequences of two strains of Mycoplasma hyopneumoniae and a strain of Mycoplasma synoviae.</title>
        <authorList>
            <person name="Vasconcelos A.T.R."/>
            <person name="Ferreira H.B."/>
            <person name="Bizarro C.V."/>
            <person name="Bonatto S.L."/>
            <person name="Carvalho M.O."/>
            <person name="Pinto P.M."/>
            <person name="Almeida D.F."/>
            <person name="Almeida L.G.P."/>
            <person name="Almeida R."/>
            <person name="Alves-Junior L."/>
            <person name="Assuncao E.N."/>
            <person name="Azevedo V.A.C."/>
            <person name="Bogo M.R."/>
            <person name="Brigido M.M."/>
            <person name="Brocchi M."/>
            <person name="Burity H.A."/>
            <person name="Camargo A.A."/>
            <person name="Camargo S.S."/>
            <person name="Carepo M.S."/>
            <person name="Carraro D.M."/>
            <person name="de Mattos Cascardo J.C."/>
            <person name="Castro L.A."/>
            <person name="Cavalcanti G."/>
            <person name="Chemale G."/>
            <person name="Collevatti R.G."/>
            <person name="Cunha C.W."/>
            <person name="Dallagiovanna B."/>
            <person name="Dambros B.P."/>
            <person name="Dellagostin O.A."/>
            <person name="Falcao C."/>
            <person name="Fantinatti-Garboggini F."/>
            <person name="Felipe M.S.S."/>
            <person name="Fiorentin L."/>
            <person name="Franco G.R."/>
            <person name="Freitas N.S.A."/>
            <person name="Frias D."/>
            <person name="Grangeiro T.B."/>
            <person name="Grisard E.C."/>
            <person name="Guimaraes C.T."/>
            <person name="Hungria M."/>
            <person name="Jardim S.N."/>
            <person name="Krieger M.A."/>
            <person name="Laurino J.P."/>
            <person name="Lima L.F.A."/>
            <person name="Lopes M.I."/>
            <person name="Loreto E.L.S."/>
            <person name="Madeira H.M.F."/>
            <person name="Manfio G.P."/>
            <person name="Maranhao A.Q."/>
            <person name="Martinkovics C.T."/>
            <person name="Medeiros S.R.B."/>
            <person name="Moreira M.A.M."/>
            <person name="Neiva M."/>
            <person name="Ramalho-Neto C.E."/>
            <person name="Nicolas M.F."/>
            <person name="Oliveira S.C."/>
            <person name="Paixao R.F.C."/>
            <person name="Pedrosa F.O."/>
            <person name="Pena S.D.J."/>
            <person name="Pereira M."/>
            <person name="Pereira-Ferrari L."/>
            <person name="Piffer I."/>
            <person name="Pinto L.S."/>
            <person name="Potrich D.P."/>
            <person name="Salim A.C.M."/>
            <person name="Santos F.R."/>
            <person name="Schmitt R."/>
            <person name="Schneider M.P.C."/>
            <person name="Schrank A."/>
            <person name="Schrank I.S."/>
            <person name="Schuck A.F."/>
            <person name="Seuanez H.N."/>
            <person name="Silva D.W."/>
            <person name="Silva R."/>
            <person name="Silva S.C."/>
            <person name="Soares C.M.A."/>
            <person name="Souza K.R.L."/>
            <person name="Souza R.C."/>
            <person name="Staats C.C."/>
            <person name="Steffens M.B.R."/>
            <person name="Teixeira S.M.R."/>
            <person name="Urmenyi T.P."/>
            <person name="Vainstein M.H."/>
            <person name="Zuccherato L.W."/>
            <person name="Simpson A.J.G."/>
            <person name="Zaha A."/>
        </authorList>
    </citation>
    <scope>NUCLEOTIDE SEQUENCE [LARGE SCALE GENOMIC DNA]</scope>
    <source>
        <strain>7448</strain>
    </source>
</reference>
<accession>Q4A8A6</accession>
<dbReference type="EC" id="2.7.4.9" evidence="1"/>
<dbReference type="EMBL" id="AE017244">
    <property type="protein sequence ID" value="AAZ53633.2"/>
    <property type="molecule type" value="Genomic_DNA"/>
</dbReference>
<dbReference type="RefSeq" id="WP_044272399.1">
    <property type="nucleotide sequence ID" value="NC_007332.1"/>
</dbReference>
<dbReference type="SMR" id="Q4A8A6"/>
<dbReference type="KEGG" id="mhp:MHP7448_0259"/>
<dbReference type="HOGENOM" id="CLU_049131_0_2_14"/>
<dbReference type="Proteomes" id="UP000000553">
    <property type="component" value="Chromosome"/>
</dbReference>
<dbReference type="GO" id="GO:0005829">
    <property type="term" value="C:cytosol"/>
    <property type="evidence" value="ECO:0007669"/>
    <property type="project" value="TreeGrafter"/>
</dbReference>
<dbReference type="GO" id="GO:0005524">
    <property type="term" value="F:ATP binding"/>
    <property type="evidence" value="ECO:0007669"/>
    <property type="project" value="UniProtKB-UniRule"/>
</dbReference>
<dbReference type="GO" id="GO:0004798">
    <property type="term" value="F:dTMP kinase activity"/>
    <property type="evidence" value="ECO:0007669"/>
    <property type="project" value="UniProtKB-UniRule"/>
</dbReference>
<dbReference type="GO" id="GO:0006233">
    <property type="term" value="P:dTDP biosynthetic process"/>
    <property type="evidence" value="ECO:0007669"/>
    <property type="project" value="InterPro"/>
</dbReference>
<dbReference type="GO" id="GO:0006235">
    <property type="term" value="P:dTTP biosynthetic process"/>
    <property type="evidence" value="ECO:0007669"/>
    <property type="project" value="UniProtKB-UniRule"/>
</dbReference>
<dbReference type="GO" id="GO:0006227">
    <property type="term" value="P:dUDP biosynthetic process"/>
    <property type="evidence" value="ECO:0007669"/>
    <property type="project" value="TreeGrafter"/>
</dbReference>
<dbReference type="CDD" id="cd01672">
    <property type="entry name" value="TMPK"/>
    <property type="match status" value="1"/>
</dbReference>
<dbReference type="FunFam" id="3.40.50.300:FF:000225">
    <property type="entry name" value="Thymidylate kinase"/>
    <property type="match status" value="1"/>
</dbReference>
<dbReference type="Gene3D" id="3.40.50.300">
    <property type="entry name" value="P-loop containing nucleotide triphosphate hydrolases"/>
    <property type="match status" value="1"/>
</dbReference>
<dbReference type="HAMAP" id="MF_00165">
    <property type="entry name" value="Thymidylate_kinase"/>
    <property type="match status" value="1"/>
</dbReference>
<dbReference type="InterPro" id="IPR027417">
    <property type="entry name" value="P-loop_NTPase"/>
</dbReference>
<dbReference type="InterPro" id="IPR039430">
    <property type="entry name" value="Thymidylate_kin-like_dom"/>
</dbReference>
<dbReference type="InterPro" id="IPR018095">
    <property type="entry name" value="Thymidylate_kin_CS"/>
</dbReference>
<dbReference type="InterPro" id="IPR018094">
    <property type="entry name" value="Thymidylate_kinase"/>
</dbReference>
<dbReference type="NCBIfam" id="TIGR00041">
    <property type="entry name" value="DTMP_kinase"/>
    <property type="match status" value="1"/>
</dbReference>
<dbReference type="PANTHER" id="PTHR10344">
    <property type="entry name" value="THYMIDYLATE KINASE"/>
    <property type="match status" value="1"/>
</dbReference>
<dbReference type="PANTHER" id="PTHR10344:SF4">
    <property type="entry name" value="UMP-CMP KINASE 2, MITOCHONDRIAL"/>
    <property type="match status" value="1"/>
</dbReference>
<dbReference type="Pfam" id="PF02223">
    <property type="entry name" value="Thymidylate_kin"/>
    <property type="match status" value="1"/>
</dbReference>
<dbReference type="SUPFAM" id="SSF52540">
    <property type="entry name" value="P-loop containing nucleoside triphosphate hydrolases"/>
    <property type="match status" value="1"/>
</dbReference>
<dbReference type="PROSITE" id="PS01331">
    <property type="entry name" value="THYMIDYLATE_KINASE"/>
    <property type="match status" value="1"/>
</dbReference>
<keyword id="KW-0067">ATP-binding</keyword>
<keyword id="KW-0418">Kinase</keyword>
<keyword id="KW-0545">Nucleotide biosynthesis</keyword>
<keyword id="KW-0547">Nucleotide-binding</keyword>
<keyword id="KW-0808">Transferase</keyword>
<protein>
    <recommendedName>
        <fullName evidence="1">Thymidylate kinase</fullName>
        <ecNumber evidence="1">2.7.4.9</ecNumber>
    </recommendedName>
    <alternativeName>
        <fullName evidence="1">dTMP kinase</fullName>
    </alternativeName>
</protein>